<accession>Q727G3</accession>
<comment type="function">
    <text evidence="1">Converts GTP to 7,8-dihydroneopterin triphosphate.</text>
</comment>
<comment type="catalytic activity">
    <reaction evidence="1">
        <text>GTP + H2O = 7,8-dihydroneopterin 3'-triphosphate + formate + H(+)</text>
        <dbReference type="Rhea" id="RHEA:17473"/>
        <dbReference type="ChEBI" id="CHEBI:15377"/>
        <dbReference type="ChEBI" id="CHEBI:15378"/>
        <dbReference type="ChEBI" id="CHEBI:15740"/>
        <dbReference type="ChEBI" id="CHEBI:37565"/>
        <dbReference type="ChEBI" id="CHEBI:58462"/>
        <dbReference type="EC" id="3.5.4.16"/>
    </reaction>
</comment>
<comment type="pathway">
    <text evidence="1">Cofactor biosynthesis; 7,8-dihydroneopterin triphosphate biosynthesis; 7,8-dihydroneopterin triphosphate from GTP: step 1/1.</text>
</comment>
<comment type="similarity">
    <text evidence="1">Belongs to the GTP cyclohydrolase IV family.</text>
</comment>
<organism>
    <name type="scientific">Nitratidesulfovibrio vulgaris (strain ATCC 29579 / DSM 644 / CCUG 34227 / NCIMB 8303 / VKM B-1760 / Hildenborough)</name>
    <name type="common">Desulfovibrio vulgaris</name>
    <dbReference type="NCBI Taxonomy" id="882"/>
    <lineage>
        <taxon>Bacteria</taxon>
        <taxon>Pseudomonadati</taxon>
        <taxon>Thermodesulfobacteriota</taxon>
        <taxon>Desulfovibrionia</taxon>
        <taxon>Desulfovibrionales</taxon>
        <taxon>Desulfovibrionaceae</taxon>
        <taxon>Nitratidesulfovibrio</taxon>
    </lineage>
</organism>
<protein>
    <recommendedName>
        <fullName evidence="1">GTP cyclohydrolase FolE2</fullName>
        <ecNumber evidence="1">3.5.4.16</ecNumber>
    </recommendedName>
</protein>
<gene>
    <name evidence="1" type="primary">folE2</name>
    <name type="ordered locus">DVU_2892</name>
</gene>
<dbReference type="EC" id="3.5.4.16" evidence="1"/>
<dbReference type="EMBL" id="AE017285">
    <property type="protein sequence ID" value="AAS97364.1"/>
    <property type="molecule type" value="Genomic_DNA"/>
</dbReference>
<dbReference type="RefSeq" id="WP_041722811.1">
    <property type="nucleotide sequence ID" value="NC_002937.3"/>
</dbReference>
<dbReference type="SMR" id="Q727G3"/>
<dbReference type="STRING" id="882.DVU_2892"/>
<dbReference type="PaxDb" id="882-DVU_2892"/>
<dbReference type="EnsemblBacteria" id="AAS97364">
    <property type="protein sequence ID" value="AAS97364"/>
    <property type="gene ID" value="DVU_2892"/>
</dbReference>
<dbReference type="KEGG" id="dvu:DVU_2892"/>
<dbReference type="eggNOG" id="COG1469">
    <property type="taxonomic scope" value="Bacteria"/>
</dbReference>
<dbReference type="HOGENOM" id="CLU_062816_1_1_7"/>
<dbReference type="PhylomeDB" id="Q727G3"/>
<dbReference type="UniPathway" id="UPA00848">
    <property type="reaction ID" value="UER00151"/>
</dbReference>
<dbReference type="Proteomes" id="UP000002194">
    <property type="component" value="Chromosome"/>
</dbReference>
<dbReference type="GO" id="GO:0003934">
    <property type="term" value="F:GTP cyclohydrolase I activity"/>
    <property type="evidence" value="ECO:0007669"/>
    <property type="project" value="UniProtKB-UniRule"/>
</dbReference>
<dbReference type="GO" id="GO:0046654">
    <property type="term" value="P:tetrahydrofolate biosynthetic process"/>
    <property type="evidence" value="ECO:0007669"/>
    <property type="project" value="UniProtKB-UniRule"/>
</dbReference>
<dbReference type="Gene3D" id="3.10.270.10">
    <property type="entry name" value="Urate Oxidase"/>
    <property type="match status" value="1"/>
</dbReference>
<dbReference type="HAMAP" id="MF_01527_B">
    <property type="entry name" value="GTP_cyclohydrol_B"/>
    <property type="match status" value="1"/>
</dbReference>
<dbReference type="InterPro" id="IPR022838">
    <property type="entry name" value="GTP_cyclohydrolase_FolE2"/>
</dbReference>
<dbReference type="InterPro" id="IPR003801">
    <property type="entry name" value="GTP_cyclohydrolase_FolE2/MptA"/>
</dbReference>
<dbReference type="NCBIfam" id="NF010200">
    <property type="entry name" value="PRK13674.1-1"/>
    <property type="match status" value="1"/>
</dbReference>
<dbReference type="PANTHER" id="PTHR36445">
    <property type="entry name" value="GTP CYCLOHYDROLASE MPTA"/>
    <property type="match status" value="1"/>
</dbReference>
<dbReference type="PANTHER" id="PTHR36445:SF1">
    <property type="entry name" value="GTP CYCLOHYDROLASE MPTA"/>
    <property type="match status" value="1"/>
</dbReference>
<dbReference type="Pfam" id="PF02649">
    <property type="entry name" value="GCHY-1"/>
    <property type="match status" value="1"/>
</dbReference>
<keyword id="KW-0378">Hydrolase</keyword>
<keyword id="KW-1185">Reference proteome</keyword>
<sequence length="264" mass="29880">MEDVQNSPAQVAMPIDRVGVKNLQLPLVVSDRAQGRQHTVATVDIGVDLPAHFKGTHMSRFVEALENWTEELDYASMKRLLEDVKTRLEARKAYVLFRFPYFIRKKAPATGSPGLVCYQCRLTGELEEGRPSFLLEVEVPVMTVCPCSKAISDEGAHSQRAVVRIAVRMTRFSWLEEFIDLAEVSGSSPVYTLLKREDEKYVTEDAFAHPTFVEDVVRAAAQRLERHPQISWFRVEVESFESIHCHNAFASIERTITPETQPGS</sequence>
<name>GCH4_NITV2</name>
<feature type="chain" id="PRO_0000147709" description="GTP cyclohydrolase FolE2">
    <location>
        <begin position="1"/>
        <end position="264"/>
    </location>
</feature>
<feature type="site" description="May be catalytically important" evidence="1">
    <location>
        <position position="145"/>
    </location>
</feature>
<proteinExistence type="inferred from homology"/>
<reference key="1">
    <citation type="journal article" date="2004" name="Nat. Biotechnol.">
        <title>The genome sequence of the anaerobic, sulfate-reducing bacterium Desulfovibrio vulgaris Hildenborough.</title>
        <authorList>
            <person name="Heidelberg J.F."/>
            <person name="Seshadri R."/>
            <person name="Haveman S.A."/>
            <person name="Hemme C.L."/>
            <person name="Paulsen I.T."/>
            <person name="Kolonay J.F."/>
            <person name="Eisen J.A."/>
            <person name="Ward N.L."/>
            <person name="Methe B.A."/>
            <person name="Brinkac L.M."/>
            <person name="Daugherty S.C."/>
            <person name="DeBoy R.T."/>
            <person name="Dodson R.J."/>
            <person name="Durkin A.S."/>
            <person name="Madupu R."/>
            <person name="Nelson W.C."/>
            <person name="Sullivan S.A."/>
            <person name="Fouts D.E."/>
            <person name="Haft D.H."/>
            <person name="Selengut J."/>
            <person name="Peterson J.D."/>
            <person name="Davidsen T.M."/>
            <person name="Zafar N."/>
            <person name="Zhou L."/>
            <person name="Radune D."/>
            <person name="Dimitrov G."/>
            <person name="Hance M."/>
            <person name="Tran K."/>
            <person name="Khouri H.M."/>
            <person name="Gill J."/>
            <person name="Utterback T.R."/>
            <person name="Feldblyum T.V."/>
            <person name="Wall J.D."/>
            <person name="Voordouw G."/>
            <person name="Fraser C.M."/>
        </authorList>
    </citation>
    <scope>NUCLEOTIDE SEQUENCE [LARGE SCALE GENOMIC DNA]</scope>
    <source>
        <strain>ATCC 29579 / DSM 644 / CCUG 34227 / NCIMB 8303 / VKM B-1760 / Hildenborough</strain>
    </source>
</reference>
<evidence type="ECO:0000255" key="1">
    <source>
        <dbReference type="HAMAP-Rule" id="MF_01527"/>
    </source>
</evidence>